<accession>B2VHX7</accession>
<organism>
    <name type="scientific">Erwinia tasmaniensis (strain DSM 17950 / CFBP 7177 / CIP 109463 / NCPPB 4357 / Et1/99)</name>
    <dbReference type="NCBI Taxonomy" id="465817"/>
    <lineage>
        <taxon>Bacteria</taxon>
        <taxon>Pseudomonadati</taxon>
        <taxon>Pseudomonadota</taxon>
        <taxon>Gammaproteobacteria</taxon>
        <taxon>Enterobacterales</taxon>
        <taxon>Erwiniaceae</taxon>
        <taxon>Erwinia</taxon>
    </lineage>
</organism>
<reference key="1">
    <citation type="journal article" date="2008" name="Environ. Microbiol.">
        <title>The genome of Erwinia tasmaniensis strain Et1/99, a non-pathogenic bacterium in the genus Erwinia.</title>
        <authorList>
            <person name="Kube M."/>
            <person name="Migdoll A.M."/>
            <person name="Mueller I."/>
            <person name="Kuhl H."/>
            <person name="Beck A."/>
            <person name="Reinhardt R."/>
            <person name="Geider K."/>
        </authorList>
    </citation>
    <scope>NUCLEOTIDE SEQUENCE [LARGE SCALE GENOMIC DNA]</scope>
    <source>
        <strain>DSM 17950 / CFBP 7177 / CIP 109463 / NCPPB 4357 / Et1/99</strain>
    </source>
</reference>
<gene>
    <name evidence="1" type="primary">fabZ</name>
    <name type="ordered locus">ETA_09010</name>
</gene>
<evidence type="ECO:0000255" key="1">
    <source>
        <dbReference type="HAMAP-Rule" id="MF_00406"/>
    </source>
</evidence>
<protein>
    <recommendedName>
        <fullName evidence="1">3-hydroxyacyl-[acyl-carrier-protein] dehydratase FabZ</fullName>
        <ecNumber evidence="1">4.2.1.59</ecNumber>
    </recommendedName>
    <alternativeName>
        <fullName evidence="1">(3R)-hydroxymyristoyl-[acyl-carrier-protein] dehydratase</fullName>
        <shortName evidence="1">(3R)-hydroxymyristoyl-ACP dehydrase</shortName>
    </alternativeName>
    <alternativeName>
        <fullName evidence="1">Beta-hydroxyacyl-ACP dehydratase</fullName>
    </alternativeName>
</protein>
<comment type="function">
    <text evidence="1">Involved in unsaturated fatty acids biosynthesis. Catalyzes the dehydration of short chain beta-hydroxyacyl-ACPs and long chain saturated and unsaturated beta-hydroxyacyl-ACPs.</text>
</comment>
<comment type="catalytic activity">
    <reaction evidence="1">
        <text>a (3R)-hydroxyacyl-[ACP] = a (2E)-enoyl-[ACP] + H2O</text>
        <dbReference type="Rhea" id="RHEA:13097"/>
        <dbReference type="Rhea" id="RHEA-COMP:9925"/>
        <dbReference type="Rhea" id="RHEA-COMP:9945"/>
        <dbReference type="ChEBI" id="CHEBI:15377"/>
        <dbReference type="ChEBI" id="CHEBI:78784"/>
        <dbReference type="ChEBI" id="CHEBI:78827"/>
        <dbReference type="EC" id="4.2.1.59"/>
    </reaction>
</comment>
<comment type="subcellular location">
    <subcellularLocation>
        <location evidence="1">Cytoplasm</location>
    </subcellularLocation>
</comment>
<comment type="similarity">
    <text evidence="1">Belongs to the thioester dehydratase family. FabZ subfamily.</text>
</comment>
<sequence length="151" mass="17098">MTTETHTLKIEEIIELLPHRYPFLLVDRVLEFEESKYLRAVKNVSVNEPFFQGHFPGKPIFPGVLILEAMAQATGILAFKSVGKLEPGELYYFAGIDEARFKRPVVPGDQMIMEVTFEKTRRGLTRFKGVATVDGKIVCEATMMCARSREA</sequence>
<proteinExistence type="inferred from homology"/>
<keyword id="KW-0963">Cytoplasm</keyword>
<keyword id="KW-0441">Lipid A biosynthesis</keyword>
<keyword id="KW-0444">Lipid biosynthesis</keyword>
<keyword id="KW-0443">Lipid metabolism</keyword>
<keyword id="KW-0456">Lyase</keyword>
<keyword id="KW-1185">Reference proteome</keyword>
<feature type="chain" id="PRO_1000123637" description="3-hydroxyacyl-[acyl-carrier-protein] dehydratase FabZ">
    <location>
        <begin position="1"/>
        <end position="151"/>
    </location>
</feature>
<feature type="active site" evidence="1">
    <location>
        <position position="54"/>
    </location>
</feature>
<name>FABZ_ERWT9</name>
<dbReference type="EC" id="4.2.1.59" evidence="1"/>
<dbReference type="EMBL" id="CU468135">
    <property type="protein sequence ID" value="CAO95947.1"/>
    <property type="molecule type" value="Genomic_DNA"/>
</dbReference>
<dbReference type="RefSeq" id="WP_012440649.1">
    <property type="nucleotide sequence ID" value="NC_010694.1"/>
</dbReference>
<dbReference type="SMR" id="B2VHX7"/>
<dbReference type="STRING" id="465817.ETA_09010"/>
<dbReference type="KEGG" id="eta:ETA_09010"/>
<dbReference type="eggNOG" id="COG0764">
    <property type="taxonomic scope" value="Bacteria"/>
</dbReference>
<dbReference type="HOGENOM" id="CLU_078912_1_0_6"/>
<dbReference type="OrthoDB" id="9772788at2"/>
<dbReference type="Proteomes" id="UP000001726">
    <property type="component" value="Chromosome"/>
</dbReference>
<dbReference type="GO" id="GO:0005737">
    <property type="term" value="C:cytoplasm"/>
    <property type="evidence" value="ECO:0007669"/>
    <property type="project" value="UniProtKB-SubCell"/>
</dbReference>
<dbReference type="GO" id="GO:0016020">
    <property type="term" value="C:membrane"/>
    <property type="evidence" value="ECO:0007669"/>
    <property type="project" value="GOC"/>
</dbReference>
<dbReference type="GO" id="GO:0019171">
    <property type="term" value="F:(3R)-hydroxyacyl-[acyl-carrier-protein] dehydratase activity"/>
    <property type="evidence" value="ECO:0007669"/>
    <property type="project" value="UniProtKB-EC"/>
</dbReference>
<dbReference type="GO" id="GO:0006633">
    <property type="term" value="P:fatty acid biosynthetic process"/>
    <property type="evidence" value="ECO:0007669"/>
    <property type="project" value="UniProtKB-UniRule"/>
</dbReference>
<dbReference type="GO" id="GO:0009245">
    <property type="term" value="P:lipid A biosynthetic process"/>
    <property type="evidence" value="ECO:0007669"/>
    <property type="project" value="UniProtKB-UniRule"/>
</dbReference>
<dbReference type="CDD" id="cd01288">
    <property type="entry name" value="FabZ"/>
    <property type="match status" value="1"/>
</dbReference>
<dbReference type="FunFam" id="3.10.129.10:FF:000001">
    <property type="entry name" value="3-hydroxyacyl-[acyl-carrier-protein] dehydratase FabZ"/>
    <property type="match status" value="1"/>
</dbReference>
<dbReference type="Gene3D" id="3.10.129.10">
    <property type="entry name" value="Hotdog Thioesterase"/>
    <property type="match status" value="1"/>
</dbReference>
<dbReference type="HAMAP" id="MF_00406">
    <property type="entry name" value="FabZ"/>
    <property type="match status" value="1"/>
</dbReference>
<dbReference type="InterPro" id="IPR013114">
    <property type="entry name" value="FabA_FabZ"/>
</dbReference>
<dbReference type="InterPro" id="IPR010084">
    <property type="entry name" value="FabZ"/>
</dbReference>
<dbReference type="InterPro" id="IPR029069">
    <property type="entry name" value="HotDog_dom_sf"/>
</dbReference>
<dbReference type="NCBIfam" id="TIGR01750">
    <property type="entry name" value="fabZ"/>
    <property type="match status" value="1"/>
</dbReference>
<dbReference type="NCBIfam" id="NF000582">
    <property type="entry name" value="PRK00006.1"/>
    <property type="match status" value="1"/>
</dbReference>
<dbReference type="PANTHER" id="PTHR30272">
    <property type="entry name" value="3-HYDROXYACYL-[ACYL-CARRIER-PROTEIN] DEHYDRATASE"/>
    <property type="match status" value="1"/>
</dbReference>
<dbReference type="PANTHER" id="PTHR30272:SF1">
    <property type="entry name" value="3-HYDROXYACYL-[ACYL-CARRIER-PROTEIN] DEHYDRATASE"/>
    <property type="match status" value="1"/>
</dbReference>
<dbReference type="Pfam" id="PF07977">
    <property type="entry name" value="FabA"/>
    <property type="match status" value="1"/>
</dbReference>
<dbReference type="SUPFAM" id="SSF54637">
    <property type="entry name" value="Thioesterase/thiol ester dehydrase-isomerase"/>
    <property type="match status" value="1"/>
</dbReference>